<evidence type="ECO:0000255" key="1">
    <source>
        <dbReference type="HAMAP-Rule" id="MF_00218"/>
    </source>
</evidence>
<comment type="function">
    <text evidence="1">Catalyzes the decarboxylation of four acetate groups of uroporphyrinogen-III to yield coproporphyrinogen-III.</text>
</comment>
<comment type="catalytic activity">
    <reaction evidence="1">
        <text>uroporphyrinogen III + 4 H(+) = coproporphyrinogen III + 4 CO2</text>
        <dbReference type="Rhea" id="RHEA:19865"/>
        <dbReference type="ChEBI" id="CHEBI:15378"/>
        <dbReference type="ChEBI" id="CHEBI:16526"/>
        <dbReference type="ChEBI" id="CHEBI:57308"/>
        <dbReference type="ChEBI" id="CHEBI:57309"/>
        <dbReference type="EC" id="4.1.1.37"/>
    </reaction>
</comment>
<comment type="pathway">
    <text evidence="1">Porphyrin-containing compound metabolism; protoporphyrin-IX biosynthesis; coproporphyrinogen-III from 5-aminolevulinate: step 4/4.</text>
</comment>
<comment type="subunit">
    <text evidence="1">Homodimer.</text>
</comment>
<comment type="subcellular location">
    <subcellularLocation>
        <location evidence="1">Cytoplasm</location>
    </subcellularLocation>
</comment>
<comment type="similarity">
    <text evidence="1">Belongs to the uroporphyrinogen decarboxylase family.</text>
</comment>
<name>DCUP_SHESR</name>
<keyword id="KW-0963">Cytoplasm</keyword>
<keyword id="KW-0210">Decarboxylase</keyword>
<keyword id="KW-0456">Lyase</keyword>
<keyword id="KW-0627">Porphyrin biosynthesis</keyword>
<reference key="1">
    <citation type="submission" date="2006-08" db="EMBL/GenBank/DDBJ databases">
        <title>Complete sequence of chromosome 1 of Shewanella sp. MR-7.</title>
        <authorList>
            <person name="Copeland A."/>
            <person name="Lucas S."/>
            <person name="Lapidus A."/>
            <person name="Barry K."/>
            <person name="Detter J.C."/>
            <person name="Glavina del Rio T."/>
            <person name="Hammon N."/>
            <person name="Israni S."/>
            <person name="Dalin E."/>
            <person name="Tice H."/>
            <person name="Pitluck S."/>
            <person name="Kiss H."/>
            <person name="Brettin T."/>
            <person name="Bruce D."/>
            <person name="Han C."/>
            <person name="Tapia R."/>
            <person name="Gilna P."/>
            <person name="Schmutz J."/>
            <person name="Larimer F."/>
            <person name="Land M."/>
            <person name="Hauser L."/>
            <person name="Kyrpides N."/>
            <person name="Mikhailova N."/>
            <person name="Nealson K."/>
            <person name="Konstantinidis K."/>
            <person name="Klappenbach J."/>
            <person name="Tiedje J."/>
            <person name="Richardson P."/>
        </authorList>
    </citation>
    <scope>NUCLEOTIDE SEQUENCE [LARGE SCALE GENOMIC DNA]</scope>
    <source>
        <strain>MR-7</strain>
    </source>
</reference>
<accession>Q0HQN5</accession>
<protein>
    <recommendedName>
        <fullName evidence="1">Uroporphyrinogen decarboxylase</fullName>
        <shortName evidence="1">UPD</shortName>
        <shortName evidence="1">URO-D</shortName>
        <ecNumber evidence="1">4.1.1.37</ecNumber>
    </recommendedName>
</protein>
<gene>
    <name evidence="1" type="primary">hemE</name>
    <name type="ordered locus">Shewmr7_3590</name>
</gene>
<proteinExistence type="inferred from homology"/>
<sequence>MAELKNDRYLRALLKQPVDMTPVWMMRQAGRYLPEYKATRAQAGDFMSLCKNHELACEVTLQPLRRYELDAAILFSDILTVPDAMGLGLYFEAGEGPRFERPTDTIDAIKKLAVPDPEDDLGYVMKAVSTIRRELNGQVPLIGFSGSPWTLATYMVEGGSSKTFEKIKKMAYAEPAALHMLLDKLADSVTLYLNAQVANGAQSLMIFDSWGGALSHTAYREFSLRYMQKIVDGLTRFADGRQVPVTLFTKGGGLWLEAMAETGCDALGLDWTVDIADARRRVGHKVALQGNMDPSMLYAPIPRIEEEVAQILAGYGEGTGHVFNLGHGIHQHVDPEHAGAFIKAVHAQSKQYHK</sequence>
<feature type="chain" id="PRO_1000023975" description="Uroporphyrinogen decarboxylase">
    <location>
        <begin position="1"/>
        <end position="354"/>
    </location>
</feature>
<feature type="binding site" evidence="1">
    <location>
        <begin position="27"/>
        <end position="31"/>
    </location>
    <ligand>
        <name>substrate</name>
    </ligand>
</feature>
<feature type="binding site" evidence="1">
    <location>
        <position position="77"/>
    </location>
    <ligand>
        <name>substrate</name>
    </ligand>
</feature>
<feature type="binding site" evidence="1">
    <location>
        <position position="154"/>
    </location>
    <ligand>
        <name>substrate</name>
    </ligand>
</feature>
<feature type="binding site" evidence="1">
    <location>
        <position position="209"/>
    </location>
    <ligand>
        <name>substrate</name>
    </ligand>
</feature>
<feature type="binding site" evidence="1">
    <location>
        <position position="327"/>
    </location>
    <ligand>
        <name>substrate</name>
    </ligand>
</feature>
<feature type="site" description="Transition state stabilizer" evidence="1">
    <location>
        <position position="77"/>
    </location>
</feature>
<organism>
    <name type="scientific">Shewanella sp. (strain MR-7)</name>
    <dbReference type="NCBI Taxonomy" id="60481"/>
    <lineage>
        <taxon>Bacteria</taxon>
        <taxon>Pseudomonadati</taxon>
        <taxon>Pseudomonadota</taxon>
        <taxon>Gammaproteobacteria</taxon>
        <taxon>Alteromonadales</taxon>
        <taxon>Shewanellaceae</taxon>
        <taxon>Shewanella</taxon>
    </lineage>
</organism>
<dbReference type="EC" id="4.1.1.37" evidence="1"/>
<dbReference type="EMBL" id="CP000444">
    <property type="protein sequence ID" value="ABI44570.1"/>
    <property type="molecule type" value="Genomic_DNA"/>
</dbReference>
<dbReference type="SMR" id="Q0HQN5"/>
<dbReference type="KEGG" id="shm:Shewmr7_3590"/>
<dbReference type="HOGENOM" id="CLU_040933_0_0_6"/>
<dbReference type="UniPathway" id="UPA00251">
    <property type="reaction ID" value="UER00321"/>
</dbReference>
<dbReference type="GO" id="GO:0005829">
    <property type="term" value="C:cytosol"/>
    <property type="evidence" value="ECO:0007669"/>
    <property type="project" value="TreeGrafter"/>
</dbReference>
<dbReference type="GO" id="GO:0004853">
    <property type="term" value="F:uroporphyrinogen decarboxylase activity"/>
    <property type="evidence" value="ECO:0007669"/>
    <property type="project" value="UniProtKB-UniRule"/>
</dbReference>
<dbReference type="GO" id="GO:0019353">
    <property type="term" value="P:protoporphyrinogen IX biosynthetic process from glutamate"/>
    <property type="evidence" value="ECO:0007669"/>
    <property type="project" value="TreeGrafter"/>
</dbReference>
<dbReference type="CDD" id="cd00717">
    <property type="entry name" value="URO-D"/>
    <property type="match status" value="1"/>
</dbReference>
<dbReference type="FunFam" id="3.20.20.210:FF:000001">
    <property type="entry name" value="Uroporphyrinogen decarboxylase"/>
    <property type="match status" value="1"/>
</dbReference>
<dbReference type="Gene3D" id="3.20.20.210">
    <property type="match status" value="1"/>
</dbReference>
<dbReference type="HAMAP" id="MF_00218">
    <property type="entry name" value="URO_D"/>
    <property type="match status" value="1"/>
</dbReference>
<dbReference type="InterPro" id="IPR038071">
    <property type="entry name" value="UROD/MetE-like_sf"/>
</dbReference>
<dbReference type="InterPro" id="IPR006361">
    <property type="entry name" value="Uroporphyrinogen_deCO2ase_HemE"/>
</dbReference>
<dbReference type="InterPro" id="IPR000257">
    <property type="entry name" value="Uroporphyrinogen_deCOase"/>
</dbReference>
<dbReference type="NCBIfam" id="TIGR01464">
    <property type="entry name" value="hemE"/>
    <property type="match status" value="1"/>
</dbReference>
<dbReference type="PANTHER" id="PTHR21091">
    <property type="entry name" value="METHYLTETRAHYDROFOLATE:HOMOCYSTEINE METHYLTRANSFERASE RELATED"/>
    <property type="match status" value="1"/>
</dbReference>
<dbReference type="PANTHER" id="PTHR21091:SF169">
    <property type="entry name" value="UROPORPHYRINOGEN DECARBOXYLASE"/>
    <property type="match status" value="1"/>
</dbReference>
<dbReference type="Pfam" id="PF01208">
    <property type="entry name" value="URO-D"/>
    <property type="match status" value="1"/>
</dbReference>
<dbReference type="SUPFAM" id="SSF51726">
    <property type="entry name" value="UROD/MetE-like"/>
    <property type="match status" value="1"/>
</dbReference>
<dbReference type="PROSITE" id="PS00906">
    <property type="entry name" value="UROD_1"/>
    <property type="match status" value="1"/>
</dbReference>
<dbReference type="PROSITE" id="PS00907">
    <property type="entry name" value="UROD_2"/>
    <property type="match status" value="1"/>
</dbReference>